<gene>
    <name type="ordered locus">BQ2027_MB2320</name>
</gene>
<sequence length="323" mass="34986">MKYLDVDGIGQVSRIGLGTWQFGSREWGYGDRYATGAARDIVKRARALGVTLFDTAEIYGLGKSERILGEALGDDRTEVVVASKVFPVAPFPAVIKNRERASARRLQLNRIPLYQIHQPNPVVPDSVIMPGMRDLLDSGDIGAAGVSNYSLARWRKADAALGRPVVSNQVHFSLAHPDALEDLVPFAELENRIVIAYSPLAQGLLGGKYGLENRPGGVRALNPLFGTENLRRIEPLLATLRAIAVDVDAKPAQVALAWLISLPGVVAIPGASSVEQLEFNVAAADIELSAQSRDALTDAARAFRPVSTGRFLTDMVREKVSRR</sequence>
<reference key="1">
    <citation type="journal article" date="2003" name="Proc. Natl. Acad. Sci. U.S.A.">
        <title>The complete genome sequence of Mycobacterium bovis.</title>
        <authorList>
            <person name="Garnier T."/>
            <person name="Eiglmeier K."/>
            <person name="Camus J.-C."/>
            <person name="Medina N."/>
            <person name="Mansoor H."/>
            <person name="Pryor M."/>
            <person name="Duthoy S."/>
            <person name="Grondin S."/>
            <person name="Lacroix C."/>
            <person name="Monsempe C."/>
            <person name="Simon S."/>
            <person name="Harris B."/>
            <person name="Atkin R."/>
            <person name="Doggett J."/>
            <person name="Mayes R."/>
            <person name="Keating L."/>
            <person name="Wheeler P.R."/>
            <person name="Parkhill J."/>
            <person name="Barrell B.G."/>
            <person name="Cole S.T."/>
            <person name="Gordon S.V."/>
            <person name="Hewinson R.G."/>
        </authorList>
    </citation>
    <scope>NUCLEOTIDE SEQUENCE [LARGE SCALE GENOMIC DNA]</scope>
    <source>
        <strain>ATCC BAA-935 / AF2122/97</strain>
    </source>
</reference>
<reference key="2">
    <citation type="journal article" date="2017" name="Genome Announc.">
        <title>Updated reference genome sequence and annotation of Mycobacterium bovis AF2122/97.</title>
        <authorList>
            <person name="Malone K.M."/>
            <person name="Farrell D."/>
            <person name="Stuber T.P."/>
            <person name="Schubert O.T."/>
            <person name="Aebersold R."/>
            <person name="Robbe-Austerman S."/>
            <person name="Gordon S.V."/>
        </authorList>
    </citation>
    <scope>NUCLEOTIDE SEQUENCE [LARGE SCALE GENOMIC DNA]</scope>
    <scope>GENOME REANNOTATION</scope>
    <source>
        <strain>ATCC BAA-935 / AF2122/97</strain>
    </source>
</reference>
<feature type="chain" id="PRO_0000070397" description="Uncharacterized oxidoreductase Mb2320">
    <location>
        <begin position="1"/>
        <end position="323"/>
    </location>
</feature>
<feature type="active site" description="Proton donor" evidence="1">
    <location>
        <position position="59"/>
    </location>
</feature>
<feature type="binding site" evidence="1">
    <location>
        <begin position="198"/>
        <end position="208"/>
    </location>
    <ligand>
        <name>NADP(+)</name>
        <dbReference type="ChEBI" id="CHEBI:58349"/>
    </ligand>
</feature>
<organism>
    <name type="scientific">Mycobacterium bovis (strain ATCC BAA-935 / AF2122/97)</name>
    <dbReference type="NCBI Taxonomy" id="233413"/>
    <lineage>
        <taxon>Bacteria</taxon>
        <taxon>Bacillati</taxon>
        <taxon>Actinomycetota</taxon>
        <taxon>Actinomycetes</taxon>
        <taxon>Mycobacteriales</taxon>
        <taxon>Mycobacteriaceae</taxon>
        <taxon>Mycobacterium</taxon>
        <taxon>Mycobacterium tuberculosis complex</taxon>
    </lineage>
</organism>
<keyword id="KW-0521">NADP</keyword>
<keyword id="KW-0560">Oxidoreductase</keyword>
<keyword id="KW-1185">Reference proteome</keyword>
<accession>P63485</accession>
<accession>A0A1R3Y0T9</accession>
<accession>Q50668</accession>
<accession>X2BKP9</accession>
<evidence type="ECO:0000250" key="1"/>
<evidence type="ECO:0000305" key="2"/>
<comment type="similarity">
    <text evidence="2">Belongs to the aldo/keto reductase family. Aldo/keto reductase 2 subfamily.</text>
</comment>
<name>Y2320_MYCBO</name>
<dbReference type="EC" id="1.-.-.-"/>
<dbReference type="EMBL" id="LT708304">
    <property type="protein sequence ID" value="SIU00932.1"/>
    <property type="molecule type" value="Genomic_DNA"/>
</dbReference>
<dbReference type="RefSeq" id="NP_855969.1">
    <property type="nucleotide sequence ID" value="NC_002945.3"/>
</dbReference>
<dbReference type="RefSeq" id="WP_003902161.1">
    <property type="nucleotide sequence ID" value="NC_002945.4"/>
</dbReference>
<dbReference type="SMR" id="P63485"/>
<dbReference type="KEGG" id="mbo:BQ2027_MB2320"/>
<dbReference type="PATRIC" id="fig|233413.5.peg.2544"/>
<dbReference type="Proteomes" id="UP000001419">
    <property type="component" value="Chromosome"/>
</dbReference>
<dbReference type="GO" id="GO:0016491">
    <property type="term" value="F:oxidoreductase activity"/>
    <property type="evidence" value="ECO:0007669"/>
    <property type="project" value="UniProtKB-KW"/>
</dbReference>
<dbReference type="CDD" id="cd19093">
    <property type="entry name" value="AKR_AtPLR-like"/>
    <property type="match status" value="1"/>
</dbReference>
<dbReference type="Gene3D" id="3.20.20.100">
    <property type="entry name" value="NADP-dependent oxidoreductase domain"/>
    <property type="match status" value="1"/>
</dbReference>
<dbReference type="InterPro" id="IPR050523">
    <property type="entry name" value="AKR_Detox_Biosynth"/>
</dbReference>
<dbReference type="InterPro" id="IPR023210">
    <property type="entry name" value="NADP_OxRdtase_dom"/>
</dbReference>
<dbReference type="InterPro" id="IPR036812">
    <property type="entry name" value="NADP_OxRdtase_dom_sf"/>
</dbReference>
<dbReference type="PANTHER" id="PTHR43364:SF4">
    <property type="entry name" value="NAD(P)-LINKED OXIDOREDUCTASE SUPERFAMILY PROTEIN"/>
    <property type="match status" value="1"/>
</dbReference>
<dbReference type="PANTHER" id="PTHR43364">
    <property type="entry name" value="NADH-SPECIFIC METHYLGLYOXAL REDUCTASE-RELATED"/>
    <property type="match status" value="1"/>
</dbReference>
<dbReference type="Pfam" id="PF00248">
    <property type="entry name" value="Aldo_ket_red"/>
    <property type="match status" value="1"/>
</dbReference>
<dbReference type="SUPFAM" id="SSF51430">
    <property type="entry name" value="NAD(P)-linked oxidoreductase"/>
    <property type="match status" value="1"/>
</dbReference>
<protein>
    <recommendedName>
        <fullName>Uncharacterized oxidoreductase Mb2320</fullName>
        <ecNumber>1.-.-.-</ecNumber>
    </recommendedName>
</protein>
<proteinExistence type="inferred from homology"/>